<feature type="initiator methionine" description="Removed" evidence="4">
    <location>
        <position position="1"/>
    </location>
</feature>
<feature type="chain" id="PRO_0000075999" description="D-3-phosphoglycerate dehydrogenase">
    <location>
        <begin position="2"/>
        <end position="410"/>
    </location>
</feature>
<feature type="domain" description="ACT" evidence="1">
    <location>
        <begin position="339"/>
        <end position="410"/>
    </location>
</feature>
<feature type="active site">
    <location>
        <position position="240"/>
    </location>
</feature>
<feature type="active site">
    <location>
        <position position="269"/>
    </location>
</feature>
<feature type="active site" description="Proton donor">
    <location>
        <position position="292"/>
    </location>
</feature>
<feature type="binding site" evidence="2">
    <location>
        <begin position="161"/>
        <end position="162"/>
    </location>
    <ligand>
        <name>NAD(+)</name>
        <dbReference type="ChEBI" id="CHEBI:57540"/>
    </ligand>
</feature>
<feature type="binding site" evidence="2">
    <location>
        <position position="181"/>
    </location>
    <ligand>
        <name>NAD(+)</name>
        <dbReference type="ChEBI" id="CHEBI:57540"/>
    </ligand>
</feature>
<feature type="binding site" evidence="2">
    <location>
        <begin position="238"/>
        <end position="240"/>
    </location>
    <ligand>
        <name>NAD(+)</name>
        <dbReference type="ChEBI" id="CHEBI:57540"/>
    </ligand>
</feature>
<feature type="binding site" evidence="2">
    <location>
        <position position="264"/>
    </location>
    <ligand>
        <name>NAD(+)</name>
        <dbReference type="ChEBI" id="CHEBI:57540"/>
    </ligand>
</feature>
<feature type="binding site" evidence="2">
    <location>
        <begin position="292"/>
        <end position="295"/>
    </location>
    <ligand>
        <name>NAD(+)</name>
        <dbReference type="ChEBI" id="CHEBI:57540"/>
    </ligand>
</feature>
<feature type="turn" evidence="7">
    <location>
        <begin position="6"/>
        <end position="8"/>
    </location>
</feature>
<feature type="strand" evidence="7">
    <location>
        <begin position="9"/>
        <end position="11"/>
    </location>
</feature>
<feature type="strand" evidence="6">
    <location>
        <begin position="13"/>
        <end position="15"/>
    </location>
</feature>
<feature type="helix" evidence="6">
    <location>
        <begin position="21"/>
        <end position="29"/>
    </location>
</feature>
<feature type="strand" evidence="6">
    <location>
        <begin position="35"/>
        <end position="37"/>
    </location>
</feature>
<feature type="helix" evidence="6">
    <location>
        <begin position="44"/>
        <end position="50"/>
    </location>
</feature>
<feature type="strand" evidence="6">
    <location>
        <begin position="55"/>
        <end position="59"/>
    </location>
</feature>
<feature type="strand" evidence="8">
    <location>
        <begin position="61"/>
        <end position="63"/>
    </location>
</feature>
<feature type="helix" evidence="6">
    <location>
        <begin position="67"/>
        <end position="72"/>
    </location>
</feature>
<feature type="strand" evidence="6">
    <location>
        <begin position="78"/>
        <end position="81"/>
    </location>
</feature>
<feature type="helix" evidence="6">
    <location>
        <begin position="91"/>
        <end position="96"/>
    </location>
</feature>
<feature type="turn" evidence="6">
    <location>
        <begin position="105"/>
        <end position="108"/>
    </location>
</feature>
<feature type="helix" evidence="6">
    <location>
        <begin position="109"/>
        <end position="125"/>
    </location>
</feature>
<feature type="helix" evidence="6">
    <location>
        <begin position="127"/>
        <end position="136"/>
    </location>
</feature>
<feature type="helix" evidence="9">
    <location>
        <begin position="143"/>
        <end position="145"/>
    </location>
</feature>
<feature type="strand" evidence="6">
    <location>
        <begin position="153"/>
        <end position="157"/>
    </location>
</feature>
<feature type="helix" evidence="6">
    <location>
        <begin position="161"/>
        <end position="172"/>
    </location>
</feature>
<feature type="strand" evidence="6">
    <location>
        <begin position="176"/>
        <end position="180"/>
    </location>
</feature>
<feature type="helix" evidence="6">
    <location>
        <begin position="197"/>
        <end position="203"/>
    </location>
</feature>
<feature type="strand" evidence="6">
    <location>
        <begin position="205"/>
        <end position="209"/>
    </location>
</feature>
<feature type="turn" evidence="6">
    <location>
        <begin position="215"/>
        <end position="219"/>
    </location>
</feature>
<feature type="helix" evidence="6">
    <location>
        <begin position="223"/>
        <end position="228"/>
    </location>
</feature>
<feature type="strand" evidence="6">
    <location>
        <begin position="233"/>
        <end position="237"/>
    </location>
</feature>
<feature type="strand" evidence="6">
    <location>
        <begin position="241"/>
        <end position="244"/>
    </location>
</feature>
<feature type="helix" evidence="6">
    <location>
        <begin position="246"/>
        <end position="254"/>
    </location>
</feature>
<feature type="strand" evidence="6">
    <location>
        <begin position="257"/>
        <end position="264"/>
    </location>
</feature>
<feature type="turn" evidence="6">
    <location>
        <begin position="276"/>
        <end position="278"/>
    </location>
</feature>
<feature type="helix" evidence="6">
    <location>
        <begin position="279"/>
        <end position="281"/>
    </location>
</feature>
<feature type="strand" evidence="6">
    <location>
        <begin position="287"/>
        <end position="290"/>
    </location>
</feature>
<feature type="helix" evidence="6">
    <location>
        <begin position="298"/>
        <end position="318"/>
    </location>
</feature>
<feature type="strand" evidence="6">
    <location>
        <begin position="324"/>
        <end position="327"/>
    </location>
</feature>
<feature type="strand" evidence="6">
    <location>
        <begin position="336"/>
        <end position="346"/>
    </location>
</feature>
<feature type="helix" evidence="6">
    <location>
        <begin position="350"/>
        <end position="360"/>
    </location>
</feature>
<feature type="strand" evidence="6">
    <location>
        <begin position="364"/>
        <end position="372"/>
    </location>
</feature>
<feature type="strand" evidence="6">
    <location>
        <begin position="374"/>
        <end position="384"/>
    </location>
</feature>
<feature type="helix" evidence="6">
    <location>
        <begin position="387"/>
        <end position="398"/>
    </location>
</feature>
<feature type="strand" evidence="6">
    <location>
        <begin position="403"/>
        <end position="410"/>
    </location>
</feature>
<name>SERA_ECOLI</name>
<keyword id="KW-0002">3D-structure</keyword>
<keyword id="KW-0028">Amino-acid biosynthesis</keyword>
<keyword id="KW-0903">Direct protein sequencing</keyword>
<keyword id="KW-0520">NAD</keyword>
<keyword id="KW-0560">Oxidoreductase</keyword>
<keyword id="KW-1185">Reference proteome</keyword>
<keyword id="KW-0718">Serine biosynthesis</keyword>
<proteinExistence type="evidence at protein level"/>
<sequence>MAKVSLEKDKIKFLLVEGVHQKALESLRAAGYTNIEFHKGALDDEQLKESIRDAHFIGLRSRTHLTEDVINAAEKLVAIGCFCIGTNQVDLDAAAKRGIPVFNAPFSNTRSVAELVIGELLLLLRGVPEANAKAHRGVWNKLAAGSFEARGKKLGIIGYGHIGTQLGILAESLGMYVYFYDIENKLPLGNATQVQHLSDLLNMSDVVSLHVPENPSTKNMMGAKEISLMKPGSLLINASRGTVVDIPALCDALASKHLAGAAIDVFPTEPATNSDPFTSPLCEFDNVLLTPHIGGSTQEAQENIGLEVAGKLIKYSDNGSTLSAVNFPEVSLPLHGGRRLMHIHENRPGVLTALNKIFAEQGVNIAAQYLQTSAQMGYVVIDIEADEDVAEKALQAMKAIPGTIRARLLY</sequence>
<dbReference type="EC" id="1.1.1.95" evidence="3"/>
<dbReference type="EC" id="1.1.1.399" evidence="3"/>
<dbReference type="EMBL" id="L29397">
    <property type="protein sequence ID" value="AAA24625.1"/>
    <property type="molecule type" value="Genomic_DNA"/>
</dbReference>
<dbReference type="EMBL" id="U28377">
    <property type="protein sequence ID" value="AAA69080.1"/>
    <property type="molecule type" value="Genomic_DNA"/>
</dbReference>
<dbReference type="EMBL" id="U00096">
    <property type="protein sequence ID" value="AAC75950.1"/>
    <property type="molecule type" value="Genomic_DNA"/>
</dbReference>
<dbReference type="EMBL" id="AP009048">
    <property type="protein sequence ID" value="BAE76977.1"/>
    <property type="molecule type" value="Genomic_DNA"/>
</dbReference>
<dbReference type="EMBL" id="X66836">
    <property type="protein sequence ID" value="CAA47308.1"/>
    <property type="molecule type" value="Genomic_DNA"/>
</dbReference>
<dbReference type="EMBL" id="M64630">
    <property type="protein sequence ID" value="AAA73016.1"/>
    <property type="molecule type" value="Genomic_DNA"/>
</dbReference>
<dbReference type="PIR" id="A25200">
    <property type="entry name" value="DEECPG"/>
</dbReference>
<dbReference type="RefSeq" id="NP_417388.1">
    <property type="nucleotide sequence ID" value="NC_000913.3"/>
</dbReference>
<dbReference type="RefSeq" id="WP_001151604.1">
    <property type="nucleotide sequence ID" value="NZ_STEB01000001.1"/>
</dbReference>
<dbReference type="PDB" id="1PSD">
    <property type="method" value="X-ray"/>
    <property type="resolution" value="2.75 A"/>
    <property type="chains" value="A/B=2-410"/>
</dbReference>
<dbReference type="PDB" id="1SC6">
    <property type="method" value="X-ray"/>
    <property type="resolution" value="2.09 A"/>
    <property type="chains" value="A/B/C/D=7-410"/>
</dbReference>
<dbReference type="PDB" id="1YBA">
    <property type="method" value="X-ray"/>
    <property type="resolution" value="2.24 A"/>
    <property type="chains" value="A/B/C/D=1-410"/>
</dbReference>
<dbReference type="PDB" id="2P9C">
    <property type="method" value="X-ray"/>
    <property type="resolution" value="2.46 A"/>
    <property type="chains" value="A/B=1-410"/>
</dbReference>
<dbReference type="PDB" id="2P9E">
    <property type="method" value="X-ray"/>
    <property type="resolution" value="2.60 A"/>
    <property type="chains" value="A/B/C/D=1-410"/>
</dbReference>
<dbReference type="PDB" id="2P9G">
    <property type="method" value="X-ray"/>
    <property type="resolution" value="2.80 A"/>
    <property type="chains" value="A/B=1-410"/>
</dbReference>
<dbReference type="PDB" id="2PA3">
    <property type="method" value="X-ray"/>
    <property type="resolution" value="2.74 A"/>
    <property type="chains" value="A=1-410"/>
</dbReference>
<dbReference type="PDBsum" id="1PSD"/>
<dbReference type="PDBsum" id="1SC6"/>
<dbReference type="PDBsum" id="1YBA"/>
<dbReference type="PDBsum" id="2P9C"/>
<dbReference type="PDBsum" id="2P9E"/>
<dbReference type="PDBsum" id="2P9G"/>
<dbReference type="PDBsum" id="2PA3"/>
<dbReference type="SMR" id="P0A9T0"/>
<dbReference type="BioGRID" id="4261173">
    <property type="interactions" value="30"/>
</dbReference>
<dbReference type="DIP" id="DIP-10851N"/>
<dbReference type="FunCoup" id="P0A9T0">
    <property type="interactions" value="730"/>
</dbReference>
<dbReference type="IntAct" id="P0A9T0">
    <property type="interactions" value="3"/>
</dbReference>
<dbReference type="STRING" id="511145.b2913"/>
<dbReference type="jPOST" id="P0A9T0"/>
<dbReference type="PaxDb" id="511145-b2913"/>
<dbReference type="EnsemblBacteria" id="AAC75950">
    <property type="protein sequence ID" value="AAC75950"/>
    <property type="gene ID" value="b2913"/>
</dbReference>
<dbReference type="GeneID" id="93779086"/>
<dbReference type="GeneID" id="945258"/>
<dbReference type="KEGG" id="ecj:JW2880"/>
<dbReference type="KEGG" id="eco:b2913"/>
<dbReference type="KEGG" id="ecoc:C3026_15965"/>
<dbReference type="PATRIC" id="fig|1411691.4.peg.3820"/>
<dbReference type="EchoBASE" id="EB0937"/>
<dbReference type="eggNOG" id="COG0111">
    <property type="taxonomic scope" value="Bacteria"/>
</dbReference>
<dbReference type="HOGENOM" id="CLU_019796_9_2_6"/>
<dbReference type="InParanoid" id="P0A9T0"/>
<dbReference type="OMA" id="SKGCWEV"/>
<dbReference type="OrthoDB" id="9805416at2"/>
<dbReference type="PhylomeDB" id="P0A9T0"/>
<dbReference type="BioCyc" id="EcoCyc:PGLYCDEHYDROG-MONOMER"/>
<dbReference type="BioCyc" id="MetaCyc:PGLYCDEHYDROG-MONOMER"/>
<dbReference type="BRENDA" id="1.1.1.95">
    <property type="organism ID" value="2026"/>
</dbReference>
<dbReference type="SABIO-RK" id="P0A9T0"/>
<dbReference type="UniPathway" id="UPA00135">
    <property type="reaction ID" value="UER00196"/>
</dbReference>
<dbReference type="EvolutionaryTrace" id="P0A9T0"/>
<dbReference type="PRO" id="PR:P0A9T0"/>
<dbReference type="Proteomes" id="UP000000625">
    <property type="component" value="Chromosome"/>
</dbReference>
<dbReference type="GO" id="GO:0005829">
    <property type="term" value="C:cytosol"/>
    <property type="evidence" value="ECO:0000314"/>
    <property type="project" value="EcoCyc"/>
</dbReference>
<dbReference type="GO" id="GO:0047545">
    <property type="term" value="F:2-hydroxyglutarate dehydrogenase activity"/>
    <property type="evidence" value="ECO:0000314"/>
    <property type="project" value="EcoCyc"/>
</dbReference>
<dbReference type="GO" id="GO:0042802">
    <property type="term" value="F:identical protein binding"/>
    <property type="evidence" value="ECO:0000314"/>
    <property type="project" value="EcoCyc"/>
</dbReference>
<dbReference type="GO" id="GO:0070403">
    <property type="term" value="F:NAD+ binding"/>
    <property type="evidence" value="ECO:0000314"/>
    <property type="project" value="EcoCyc"/>
</dbReference>
<dbReference type="GO" id="GO:0070404">
    <property type="term" value="F:NADH binding"/>
    <property type="evidence" value="ECO:0000314"/>
    <property type="project" value="EcoCyc"/>
</dbReference>
<dbReference type="GO" id="GO:0004617">
    <property type="term" value="F:phosphoglycerate dehydrogenase activity"/>
    <property type="evidence" value="ECO:0000314"/>
    <property type="project" value="EcoCyc"/>
</dbReference>
<dbReference type="GO" id="GO:0070905">
    <property type="term" value="F:serine binding"/>
    <property type="evidence" value="ECO:0000314"/>
    <property type="project" value="EcoCyc"/>
</dbReference>
<dbReference type="GO" id="GO:0006564">
    <property type="term" value="P:L-serine biosynthetic process"/>
    <property type="evidence" value="ECO:0000315"/>
    <property type="project" value="EcoCyc"/>
</dbReference>
<dbReference type="CDD" id="cd04901">
    <property type="entry name" value="ACT_3PGDH"/>
    <property type="match status" value="1"/>
</dbReference>
<dbReference type="CDD" id="cd12176">
    <property type="entry name" value="PGDH_3"/>
    <property type="match status" value="1"/>
</dbReference>
<dbReference type="FunFam" id="3.30.70.260:FF:000007">
    <property type="entry name" value="D-3-phosphoglycerate dehydrogenase"/>
    <property type="match status" value="1"/>
</dbReference>
<dbReference type="FunFam" id="3.40.50.720:FF:000041">
    <property type="entry name" value="D-3-phosphoglycerate dehydrogenase"/>
    <property type="match status" value="1"/>
</dbReference>
<dbReference type="Gene3D" id="3.30.70.260">
    <property type="match status" value="1"/>
</dbReference>
<dbReference type="Gene3D" id="3.40.50.720">
    <property type="entry name" value="NAD(P)-binding Rossmann-like Domain"/>
    <property type="match status" value="2"/>
</dbReference>
<dbReference type="InterPro" id="IPR045865">
    <property type="entry name" value="ACT-like_dom_sf"/>
</dbReference>
<dbReference type="InterPro" id="IPR002912">
    <property type="entry name" value="ACT_dom"/>
</dbReference>
<dbReference type="InterPro" id="IPR054480">
    <property type="entry name" value="AHAS_small-like_ACT"/>
</dbReference>
<dbReference type="InterPro" id="IPR050223">
    <property type="entry name" value="D-isomer_2-hydroxyacid_DH"/>
</dbReference>
<dbReference type="InterPro" id="IPR006139">
    <property type="entry name" value="D-isomer_2_OHA_DH_cat_dom"/>
</dbReference>
<dbReference type="InterPro" id="IPR029753">
    <property type="entry name" value="D-isomer_DH_CS"/>
</dbReference>
<dbReference type="InterPro" id="IPR029752">
    <property type="entry name" value="D-isomer_DH_CS1"/>
</dbReference>
<dbReference type="InterPro" id="IPR006140">
    <property type="entry name" value="D-isomer_DH_NAD-bd"/>
</dbReference>
<dbReference type="InterPro" id="IPR036291">
    <property type="entry name" value="NAD(P)-bd_dom_sf"/>
</dbReference>
<dbReference type="NCBIfam" id="NF008759">
    <property type="entry name" value="PRK11790.1"/>
    <property type="match status" value="1"/>
</dbReference>
<dbReference type="PANTHER" id="PTHR10996">
    <property type="entry name" value="2-HYDROXYACID DEHYDROGENASE-RELATED"/>
    <property type="match status" value="1"/>
</dbReference>
<dbReference type="PANTHER" id="PTHR10996:SF282">
    <property type="entry name" value="D-3-PHOSPHOGLYCERATE DEHYDROGENASE 1-RELATED"/>
    <property type="match status" value="1"/>
</dbReference>
<dbReference type="Pfam" id="PF00389">
    <property type="entry name" value="2-Hacid_dh"/>
    <property type="match status" value="1"/>
</dbReference>
<dbReference type="Pfam" id="PF02826">
    <property type="entry name" value="2-Hacid_dh_C"/>
    <property type="match status" value="1"/>
</dbReference>
<dbReference type="Pfam" id="PF22629">
    <property type="entry name" value="ACT_AHAS_ss"/>
    <property type="match status" value="1"/>
</dbReference>
<dbReference type="SUPFAM" id="SSF55021">
    <property type="entry name" value="ACT-like"/>
    <property type="match status" value="1"/>
</dbReference>
<dbReference type="SUPFAM" id="SSF52283">
    <property type="entry name" value="Formate/glycerate dehydrogenase catalytic domain-like"/>
    <property type="match status" value="1"/>
</dbReference>
<dbReference type="SUPFAM" id="SSF51735">
    <property type="entry name" value="NAD(P)-binding Rossmann-fold domains"/>
    <property type="match status" value="1"/>
</dbReference>
<dbReference type="PROSITE" id="PS51671">
    <property type="entry name" value="ACT"/>
    <property type="match status" value="1"/>
</dbReference>
<dbReference type="PROSITE" id="PS00065">
    <property type="entry name" value="D_2_HYDROXYACID_DH_1"/>
    <property type="match status" value="1"/>
</dbReference>
<dbReference type="PROSITE" id="PS00670">
    <property type="entry name" value="D_2_HYDROXYACID_DH_2"/>
    <property type="match status" value="1"/>
</dbReference>
<dbReference type="PROSITE" id="PS00671">
    <property type="entry name" value="D_2_HYDROXYACID_DH_3"/>
    <property type="match status" value="1"/>
</dbReference>
<gene>
    <name type="primary">serA</name>
    <name type="ordered locus">b2913</name>
    <name type="ordered locus">JW2880</name>
</gene>
<protein>
    <recommendedName>
        <fullName>D-3-phosphoglycerate dehydrogenase</fullName>
        <shortName>PGDH</shortName>
        <ecNumber evidence="3">1.1.1.95</ecNumber>
    </recommendedName>
    <alternativeName>
        <fullName evidence="5">2-oxoglutarate reductase</fullName>
        <ecNumber evidence="3">1.1.1.399</ecNumber>
    </alternativeName>
</protein>
<comment type="function">
    <text evidence="3">Catalyzes the reversible oxidation of 3-phospho-D-glycerate to 3-phosphonooxypyruvate, the first step of the phosphorylated L-serine biosynthesis pathway. Also catalyzes the reversible oxidation of 2-hydroxyglutarate to 2-oxoglutarate.</text>
</comment>
<comment type="catalytic activity">
    <reaction evidence="3">
        <text>(2R)-3-phosphoglycerate + NAD(+) = 3-phosphooxypyruvate + NADH + H(+)</text>
        <dbReference type="Rhea" id="RHEA:12641"/>
        <dbReference type="ChEBI" id="CHEBI:15378"/>
        <dbReference type="ChEBI" id="CHEBI:18110"/>
        <dbReference type="ChEBI" id="CHEBI:57540"/>
        <dbReference type="ChEBI" id="CHEBI:57945"/>
        <dbReference type="ChEBI" id="CHEBI:58272"/>
        <dbReference type="EC" id="1.1.1.95"/>
    </reaction>
</comment>
<comment type="catalytic activity">
    <reaction evidence="3">
        <text>(R)-2-hydroxyglutarate + NAD(+) = 2-oxoglutarate + NADH + H(+)</text>
        <dbReference type="Rhea" id="RHEA:49612"/>
        <dbReference type="ChEBI" id="CHEBI:15378"/>
        <dbReference type="ChEBI" id="CHEBI:15801"/>
        <dbReference type="ChEBI" id="CHEBI:16810"/>
        <dbReference type="ChEBI" id="CHEBI:57540"/>
        <dbReference type="ChEBI" id="CHEBI:57945"/>
        <dbReference type="EC" id="1.1.1.399"/>
    </reaction>
</comment>
<comment type="activity regulation">
    <text evidence="3">Displays feedback inhibition by L-serine. Inhibited by glycine.</text>
</comment>
<comment type="biophysicochemical properties">
    <kinetics>
        <KM evidence="3">1.2 mM for 3-phospho-D-glycerate</KM>
        <KM evidence="3">3.2 uM for 3-phosphonooxypyruvate</KM>
        <KM evidence="3">88 uM for 2-oxoglutarate</KM>
        <KM evidence="3">0.37 mM for (R)-2-hydroxyglutarate</KM>
        <KM evidence="3">2.9 mM for (S)-2-hydroxyglutarate</KM>
        <Vmax evidence="3">183.0 nmol/min/mg enzyme for 3-phospho-D-glycerate oxidation</Vmax>
        <Vmax evidence="3">9.27 umol/min/mg enzyme for 3-phosphonooxypyruvate reduction</Vmax>
        <Vmax evidence="3">11.1 umol/min/mg enzyme for 2-oxoglutarate reduction</Vmax>
        <Vmax evidence="3">237.0 nmol/min/mg enzyme for (R)-2-hydroxyglutarate oxidation</Vmax>
        <Vmax evidence="3">83.3 nmol/min/mg enzyme for (S)-2-hydroxyglutarate oxidation</Vmax>
        <text evidence="3">kcat is 0.55 sec(-1) for 3-phospho-D-glycerate oxidation. kcat is 27.8 sec(-1) for 3-phosphonooxypyruvate reduction. kcat is 33.3 sec(-1) for 2-oxoglutarate reduction. kcat is 0.71 sec(-1) for (R)-2-hydroxyglutarate oxidation. kcat is 0.25 sec(-1) for (S)-2-hydroxyglutarate oxidation.</text>
    </kinetics>
    <phDependence>
        <text evidence="3">Optimum pH is 8.5 for the reductase activities and 9.0 for the dehydrogenase activities.</text>
    </phDependence>
</comment>
<comment type="pathway">
    <text>Amino-acid biosynthesis; L-serine biosynthesis; L-serine from 3-phospho-D-glycerate: step 1/3.</text>
</comment>
<comment type="subunit">
    <text>Homotetramer.</text>
</comment>
<comment type="similarity">
    <text evidence="5">Belongs to the D-isomer specific 2-hydroxyacid dehydrogenase family.</text>
</comment>
<organism>
    <name type="scientific">Escherichia coli (strain K12)</name>
    <dbReference type="NCBI Taxonomy" id="83333"/>
    <lineage>
        <taxon>Bacteria</taxon>
        <taxon>Pseudomonadati</taxon>
        <taxon>Pseudomonadota</taxon>
        <taxon>Gammaproteobacteria</taxon>
        <taxon>Enterobacterales</taxon>
        <taxon>Enterobacteriaceae</taxon>
        <taxon>Escherichia</taxon>
    </lineage>
</organism>
<evidence type="ECO:0000255" key="1">
    <source>
        <dbReference type="PROSITE-ProRule" id="PRU01007"/>
    </source>
</evidence>
<evidence type="ECO:0000269" key="2">
    <source>
    </source>
</evidence>
<evidence type="ECO:0000269" key="3">
    <source>
    </source>
</evidence>
<evidence type="ECO:0000269" key="4">
    <source>
    </source>
</evidence>
<evidence type="ECO:0000305" key="5"/>
<evidence type="ECO:0007829" key="6">
    <source>
        <dbReference type="PDB" id="1SC6"/>
    </source>
</evidence>
<evidence type="ECO:0007829" key="7">
    <source>
        <dbReference type="PDB" id="1YBA"/>
    </source>
</evidence>
<evidence type="ECO:0007829" key="8">
    <source>
        <dbReference type="PDB" id="2P9C"/>
    </source>
</evidence>
<evidence type="ECO:0007829" key="9">
    <source>
        <dbReference type="PDB" id="2PA3"/>
    </source>
</evidence>
<accession>P0A9T0</accession>
<accession>P08328</accession>
<accession>Q2M9S9</accession>
<accession>Q47633</accession>
<reference key="1">
    <citation type="journal article" date="1986" name="J. Biol. Chem.">
        <title>The nucleotide sequence of the serA gene of Escherichia coli and the amino acid sequence of the encoded protein, D-3-phosphoglycerate dehydrogenase.</title>
        <authorList>
            <person name="Tobey K.L."/>
            <person name="Grant G.A."/>
        </authorList>
    </citation>
    <scope>NUCLEOTIDE SEQUENCE [GENOMIC DNA]</scope>
    <source>
        <strain>K12</strain>
    </source>
</reference>
<reference key="2">
    <citation type="journal article" date="1997" name="Science">
        <title>The complete genome sequence of Escherichia coli K-12.</title>
        <authorList>
            <person name="Blattner F.R."/>
            <person name="Plunkett G. III"/>
            <person name="Bloch C.A."/>
            <person name="Perna N.T."/>
            <person name="Burland V."/>
            <person name="Riley M."/>
            <person name="Collado-Vides J."/>
            <person name="Glasner J.D."/>
            <person name="Rode C.K."/>
            <person name="Mayhew G.F."/>
            <person name="Gregor J."/>
            <person name="Davis N.W."/>
            <person name="Kirkpatrick H.A."/>
            <person name="Goeden M.A."/>
            <person name="Rose D.J."/>
            <person name="Mau B."/>
            <person name="Shao Y."/>
        </authorList>
    </citation>
    <scope>NUCLEOTIDE SEQUENCE [LARGE SCALE GENOMIC DNA]</scope>
    <source>
        <strain>K12 / MG1655 / ATCC 47076</strain>
    </source>
</reference>
<reference key="3">
    <citation type="journal article" date="2006" name="Mol. Syst. Biol.">
        <title>Highly accurate genome sequences of Escherichia coli K-12 strains MG1655 and W3110.</title>
        <authorList>
            <person name="Hayashi K."/>
            <person name="Morooka N."/>
            <person name="Yamamoto Y."/>
            <person name="Fujita K."/>
            <person name="Isono K."/>
            <person name="Choi S."/>
            <person name="Ohtsubo E."/>
            <person name="Baba T."/>
            <person name="Wanner B.L."/>
            <person name="Mori H."/>
            <person name="Horiuchi T."/>
        </authorList>
    </citation>
    <scope>NUCLEOTIDE SEQUENCE [LARGE SCALE GENOMIC DNA]</scope>
    <source>
        <strain>K12 / W3110 / ATCC 27325 / DSM 5911</strain>
    </source>
</reference>
<reference key="4">
    <citation type="submission" date="1992-06" db="EMBL/GenBank/DDBJ databases">
        <authorList>
            <person name="Roy I."/>
            <person name="Leadlay P.F."/>
        </authorList>
    </citation>
    <scope>NUCLEOTIDE SEQUENCE [GENOMIC DNA] OF 1-99</scope>
    <source>
        <strain>K12</strain>
    </source>
</reference>
<reference key="5">
    <citation type="journal article" date="1991" name="J. Bacteriol.">
        <title>The tdh and serA operons of Escherichia coli: mutational analysis of the regulatory elements of leucine-responsive genes.</title>
        <authorList>
            <person name="Rex J.H."/>
            <person name="Aronson B.D."/>
            <person name="Somerville R.L."/>
        </authorList>
    </citation>
    <scope>NUCLEOTIDE SEQUENCE [GENOMIC DNA] OF 1-29</scope>
    <source>
        <strain>K12</strain>
    </source>
</reference>
<reference key="6">
    <citation type="journal article" date="1997" name="Electrophoresis">
        <title>Comparing the predicted and observed properties of proteins encoded in the genome of Escherichia coli K-12.</title>
        <authorList>
            <person name="Link A.J."/>
            <person name="Robison K."/>
            <person name="Church G.M."/>
        </authorList>
    </citation>
    <scope>PROTEIN SEQUENCE OF 2-13</scope>
    <source>
        <strain>K12 / EMG2</strain>
    </source>
</reference>
<reference key="7">
    <citation type="journal article" date="1996" name="J. Bacteriol.">
        <title>A novel alpha-ketoglutarate reductase activity of the serA-encoded 3-phosphoglycerate dehydrogenase of Escherichia coli K-12 and its possible implications for human 2-hydroxyglutaric aciduria.</title>
        <authorList>
            <person name="Zhao G."/>
            <person name="Winkler M.E."/>
        </authorList>
    </citation>
    <scope>FUNCTION</scope>
    <scope>CATALYTIC ACTIVITY</scope>
    <scope>BIOPHYSICOCHEMICAL PROPERTIES</scope>
    <scope>ACTIVITY REGULATION</scope>
    <source>
        <strain>K12 / JM105 / ATCC 47016</strain>
    </source>
</reference>
<reference key="8">
    <citation type="journal article" date="1997" name="Electrophoresis">
        <title>Escherichia coli proteome analysis using the gene-protein database.</title>
        <authorList>
            <person name="VanBogelen R.A."/>
            <person name="Abshire K.Z."/>
            <person name="Moldover B."/>
            <person name="Olson E.R."/>
            <person name="Neidhardt F.C."/>
        </authorList>
    </citation>
    <scope>IDENTIFICATION BY 2D-GEL</scope>
</reference>
<reference key="9">
    <citation type="journal article" date="1995" name="Nat. Struct. Biol.">
        <title>The allosteric ligand site in the Vmax-type cooperative enzyme phosphoglycerate dehydrogenase.</title>
        <authorList>
            <person name="Schuller D.J."/>
            <person name="Grant G.A."/>
            <person name="Banaszak L.J."/>
        </authorList>
    </citation>
    <scope>X-RAY CRYSTALLOGRAPHY (2.75 ANGSTROMS) IN COMPLEX WITH NAD</scope>
</reference>